<evidence type="ECO:0000250" key="1"/>
<evidence type="ECO:0000255" key="2">
    <source>
        <dbReference type="HAMAP-Rule" id="MF_00580"/>
    </source>
</evidence>
<evidence type="ECO:0000305" key="3"/>
<reference key="1">
    <citation type="journal article" date="2002" name="DNA Res.">
        <title>Complete genome structure of the thermophilic cyanobacterium Thermosynechococcus elongatus BP-1.</title>
        <authorList>
            <person name="Nakamura Y."/>
            <person name="Kaneko T."/>
            <person name="Sato S."/>
            <person name="Ikeuchi M."/>
            <person name="Katoh H."/>
            <person name="Sasamoto S."/>
            <person name="Watanabe A."/>
            <person name="Iriguchi M."/>
            <person name="Kawashima K."/>
            <person name="Kimura T."/>
            <person name="Kishida Y."/>
            <person name="Kiyokawa C."/>
            <person name="Kohara M."/>
            <person name="Matsumoto M."/>
            <person name="Matsuno A."/>
            <person name="Nakazaki N."/>
            <person name="Shimpo S."/>
            <person name="Sugimoto M."/>
            <person name="Takeuchi C."/>
            <person name="Yamada M."/>
            <person name="Tabata S."/>
        </authorList>
    </citation>
    <scope>NUCLEOTIDE SEQUENCE [LARGE SCALE GENOMIC DNA]</scope>
    <source>
        <strain>NIES-2133 / IAM M-273 / BP-1</strain>
    </source>
</reference>
<organism>
    <name type="scientific">Thermosynechococcus vestitus (strain NIES-2133 / IAM M-273 / BP-1)</name>
    <dbReference type="NCBI Taxonomy" id="197221"/>
    <lineage>
        <taxon>Bacteria</taxon>
        <taxon>Bacillati</taxon>
        <taxon>Cyanobacteriota</taxon>
        <taxon>Cyanophyceae</taxon>
        <taxon>Acaryochloridales</taxon>
        <taxon>Thermosynechococcaceae</taxon>
        <taxon>Thermosynechococcus</taxon>
    </lineage>
</organism>
<keyword id="KW-0143">Chaperone</keyword>
<keyword id="KW-0963">Cytoplasm</keyword>
<keyword id="KW-1185">Reference proteome</keyword>
<comment type="function">
    <text evidence="2">Together with the chaperonin GroEL, plays an essential role in assisting protein folding. The GroEL-GroES system forms a nano-cage that allows encapsulation of the non-native substrate proteins and provides a physical environment optimized to promote and accelerate protein folding. GroES binds to the apical surface of the GroEL ring, thereby capping the opening of the GroEL channel.</text>
</comment>
<comment type="subunit">
    <text evidence="2">Heptamer of 7 subunits arranged in a ring. Interacts with the chaperonin GroEL.</text>
</comment>
<comment type="subcellular location">
    <subcellularLocation>
        <location evidence="2">Cytoplasm</location>
    </subcellularLocation>
</comment>
<comment type="similarity">
    <text evidence="2 3">Belongs to the GroES chaperonin family.</text>
</comment>
<sequence>MAAVSLSVSTVKPLGDRIFVKVAESEERTAGGILLPDNAREKPQVGEVTAVGPGKLTEDGKRQPMDVKVGDKVLYSKYAGTEVKLAGEDYVLLSEKDILAIVG</sequence>
<accession>P0A347</accession>
<accession>O50322</accession>
<name>CH10_THEVB</name>
<protein>
    <recommendedName>
        <fullName evidence="2">Co-chaperonin GroES</fullName>
    </recommendedName>
    <alternativeName>
        <fullName evidence="2">10 kDa chaperonin</fullName>
    </alternativeName>
    <alternativeName>
        <fullName evidence="2">Chaperonin-10</fullName>
        <shortName evidence="2">Cpn10</shortName>
    </alternativeName>
</protein>
<proteinExistence type="inferred from homology"/>
<feature type="initiator methionine" description="Removed" evidence="1">
    <location>
        <position position="1"/>
    </location>
</feature>
<feature type="chain" id="PRO_0000174878" description="Co-chaperonin GroES">
    <location>
        <begin position="2"/>
        <end position="103"/>
    </location>
</feature>
<gene>
    <name evidence="2" type="primary">groES</name>
    <name evidence="2" type="synonym">groS</name>
    <name type="ordered locus">tll0186</name>
</gene>
<dbReference type="EMBL" id="BA000039">
    <property type="protein sequence ID" value="BAC07739.1"/>
    <property type="molecule type" value="Genomic_DNA"/>
</dbReference>
<dbReference type="RefSeq" id="NP_680977.1">
    <property type="nucleotide sequence ID" value="NC_004113.1"/>
</dbReference>
<dbReference type="RefSeq" id="WP_011056041.1">
    <property type="nucleotide sequence ID" value="NC_004113.1"/>
</dbReference>
<dbReference type="SMR" id="P0A347"/>
<dbReference type="STRING" id="197221.gene:10746767"/>
<dbReference type="EnsemblBacteria" id="BAC07739">
    <property type="protein sequence ID" value="BAC07739"/>
    <property type="gene ID" value="BAC07739"/>
</dbReference>
<dbReference type="KEGG" id="tel:tll0186"/>
<dbReference type="PATRIC" id="fig|197221.4.peg.192"/>
<dbReference type="eggNOG" id="COG0234">
    <property type="taxonomic scope" value="Bacteria"/>
</dbReference>
<dbReference type="Proteomes" id="UP000000440">
    <property type="component" value="Chromosome"/>
</dbReference>
<dbReference type="GO" id="GO:0005737">
    <property type="term" value="C:cytoplasm"/>
    <property type="evidence" value="ECO:0007669"/>
    <property type="project" value="UniProtKB-SubCell"/>
</dbReference>
<dbReference type="GO" id="GO:0005524">
    <property type="term" value="F:ATP binding"/>
    <property type="evidence" value="ECO:0007669"/>
    <property type="project" value="InterPro"/>
</dbReference>
<dbReference type="GO" id="GO:0046872">
    <property type="term" value="F:metal ion binding"/>
    <property type="evidence" value="ECO:0007669"/>
    <property type="project" value="TreeGrafter"/>
</dbReference>
<dbReference type="GO" id="GO:0044183">
    <property type="term" value="F:protein folding chaperone"/>
    <property type="evidence" value="ECO:0007669"/>
    <property type="project" value="InterPro"/>
</dbReference>
<dbReference type="GO" id="GO:0051087">
    <property type="term" value="F:protein-folding chaperone binding"/>
    <property type="evidence" value="ECO:0007669"/>
    <property type="project" value="TreeGrafter"/>
</dbReference>
<dbReference type="GO" id="GO:0051082">
    <property type="term" value="F:unfolded protein binding"/>
    <property type="evidence" value="ECO:0007669"/>
    <property type="project" value="TreeGrafter"/>
</dbReference>
<dbReference type="GO" id="GO:0051085">
    <property type="term" value="P:chaperone cofactor-dependent protein refolding"/>
    <property type="evidence" value="ECO:0007669"/>
    <property type="project" value="TreeGrafter"/>
</dbReference>
<dbReference type="CDD" id="cd00320">
    <property type="entry name" value="cpn10"/>
    <property type="match status" value="1"/>
</dbReference>
<dbReference type="FunFam" id="2.30.33.40:FF:000001">
    <property type="entry name" value="10 kDa chaperonin"/>
    <property type="match status" value="1"/>
</dbReference>
<dbReference type="Gene3D" id="2.30.33.40">
    <property type="entry name" value="GroES chaperonin"/>
    <property type="match status" value="1"/>
</dbReference>
<dbReference type="HAMAP" id="MF_00580">
    <property type="entry name" value="CH10"/>
    <property type="match status" value="1"/>
</dbReference>
<dbReference type="InterPro" id="IPR020818">
    <property type="entry name" value="Chaperonin_GroES"/>
</dbReference>
<dbReference type="InterPro" id="IPR037124">
    <property type="entry name" value="Chaperonin_GroES_sf"/>
</dbReference>
<dbReference type="InterPro" id="IPR018369">
    <property type="entry name" value="Chaprnonin_Cpn10_CS"/>
</dbReference>
<dbReference type="InterPro" id="IPR011032">
    <property type="entry name" value="GroES-like_sf"/>
</dbReference>
<dbReference type="NCBIfam" id="NF001527">
    <property type="entry name" value="PRK00364.1-2"/>
    <property type="match status" value="1"/>
</dbReference>
<dbReference type="NCBIfam" id="NF001530">
    <property type="entry name" value="PRK00364.1-6"/>
    <property type="match status" value="1"/>
</dbReference>
<dbReference type="NCBIfam" id="NF001531">
    <property type="entry name" value="PRK00364.2-2"/>
    <property type="match status" value="1"/>
</dbReference>
<dbReference type="NCBIfam" id="NF001533">
    <property type="entry name" value="PRK00364.2-4"/>
    <property type="match status" value="1"/>
</dbReference>
<dbReference type="NCBIfam" id="NF001534">
    <property type="entry name" value="PRK00364.2-5"/>
    <property type="match status" value="1"/>
</dbReference>
<dbReference type="PANTHER" id="PTHR10772">
    <property type="entry name" value="10 KDA HEAT SHOCK PROTEIN"/>
    <property type="match status" value="1"/>
</dbReference>
<dbReference type="PANTHER" id="PTHR10772:SF58">
    <property type="entry name" value="CO-CHAPERONIN GROES"/>
    <property type="match status" value="1"/>
</dbReference>
<dbReference type="Pfam" id="PF00166">
    <property type="entry name" value="Cpn10"/>
    <property type="match status" value="1"/>
</dbReference>
<dbReference type="PRINTS" id="PR00297">
    <property type="entry name" value="CHAPERONIN10"/>
</dbReference>
<dbReference type="SMART" id="SM00883">
    <property type="entry name" value="Cpn10"/>
    <property type="match status" value="1"/>
</dbReference>
<dbReference type="SUPFAM" id="SSF50129">
    <property type="entry name" value="GroES-like"/>
    <property type="match status" value="1"/>
</dbReference>
<dbReference type="PROSITE" id="PS00681">
    <property type="entry name" value="CHAPERONINS_CPN10"/>
    <property type="match status" value="1"/>
</dbReference>